<name>ATPE_CALFG</name>
<feature type="chain" id="PRO_0000188256" description="ATP synthase epsilon chain, chloroplastic">
    <location>
        <begin position="1"/>
        <end position="132"/>
    </location>
</feature>
<reference key="1">
    <citation type="journal article" date="2003" name="Plant Syst. Evol.">
        <title>The chloroplast genome of the 'basal' angiosperm Calycanthus fertilis -- structural and phylogenetic analyses.</title>
        <authorList>
            <person name="Goremykin V."/>
            <person name="Hirsch-Ernst K.I."/>
            <person name="Woelfl S."/>
            <person name="Hellwig F.H."/>
        </authorList>
    </citation>
    <scope>NUCLEOTIDE SEQUENCE [LARGE SCALE GENOMIC DNA]</scope>
</reference>
<gene>
    <name evidence="1" type="primary">atpE</name>
</gene>
<organism>
    <name type="scientific">Calycanthus floridus var. glaucus</name>
    <name type="common">Eastern sweetshrub</name>
    <name type="synonym">Calycanthus fertilis var. ferax</name>
    <dbReference type="NCBI Taxonomy" id="212734"/>
    <lineage>
        <taxon>Eukaryota</taxon>
        <taxon>Viridiplantae</taxon>
        <taxon>Streptophyta</taxon>
        <taxon>Embryophyta</taxon>
        <taxon>Tracheophyta</taxon>
        <taxon>Spermatophyta</taxon>
        <taxon>Magnoliopsida</taxon>
        <taxon>Magnoliidae</taxon>
        <taxon>Laurales</taxon>
        <taxon>Calycanthaceae</taxon>
        <taxon>Calycanthus</taxon>
    </lineage>
</organism>
<geneLocation type="chloroplast"/>
<sequence length="132" mass="14467">MTLNLCVLTPNRIIWDSEVKEIILSTNSGQIGVLPNHAPIATAVDIGILRIRLNGQWLMMAVMGGFARIGNNEITILVNDAEKGSDIDPQEAQRTLEIAEANLSKAEGKRQVIEANLALRRARTRVEAINVI</sequence>
<accession>Q7YJW6</accession>
<comment type="function">
    <text evidence="1">Produces ATP from ADP in the presence of a proton gradient across the membrane.</text>
</comment>
<comment type="subunit">
    <text evidence="1">F-type ATPases have 2 components, CF(1) - the catalytic core - and CF(0) - the membrane proton channel. CF(1) has five subunits: alpha(3), beta(3), gamma(1), delta(1), epsilon(1). CF(0) has three main subunits: a, b and c.</text>
</comment>
<comment type="subcellular location">
    <subcellularLocation>
        <location evidence="1">Plastid</location>
        <location evidence="1">Chloroplast thylakoid membrane</location>
        <topology evidence="1">Peripheral membrane protein</topology>
    </subcellularLocation>
</comment>
<comment type="similarity">
    <text evidence="1">Belongs to the ATPase epsilon chain family.</text>
</comment>
<dbReference type="EMBL" id="AJ428413">
    <property type="protein sequence ID" value="CAD28727.1"/>
    <property type="molecule type" value="Genomic_DNA"/>
</dbReference>
<dbReference type="RefSeq" id="NP_862760.1">
    <property type="nucleotide sequence ID" value="NC_004993.1"/>
</dbReference>
<dbReference type="SMR" id="Q7YJW6"/>
<dbReference type="GeneID" id="2597976"/>
<dbReference type="GO" id="GO:0009535">
    <property type="term" value="C:chloroplast thylakoid membrane"/>
    <property type="evidence" value="ECO:0007669"/>
    <property type="project" value="UniProtKB-SubCell"/>
</dbReference>
<dbReference type="GO" id="GO:0045259">
    <property type="term" value="C:proton-transporting ATP synthase complex"/>
    <property type="evidence" value="ECO:0007669"/>
    <property type="project" value="UniProtKB-KW"/>
</dbReference>
<dbReference type="GO" id="GO:0005524">
    <property type="term" value="F:ATP binding"/>
    <property type="evidence" value="ECO:0007669"/>
    <property type="project" value="UniProtKB-UniRule"/>
</dbReference>
<dbReference type="GO" id="GO:0046933">
    <property type="term" value="F:proton-transporting ATP synthase activity, rotational mechanism"/>
    <property type="evidence" value="ECO:0007669"/>
    <property type="project" value="UniProtKB-UniRule"/>
</dbReference>
<dbReference type="CDD" id="cd12152">
    <property type="entry name" value="F1-ATPase_delta"/>
    <property type="match status" value="1"/>
</dbReference>
<dbReference type="FunFam" id="2.60.15.10:FF:000002">
    <property type="entry name" value="ATP synthase epsilon chain, chloroplastic"/>
    <property type="match status" value="1"/>
</dbReference>
<dbReference type="Gene3D" id="6.10.140.480">
    <property type="match status" value="1"/>
</dbReference>
<dbReference type="Gene3D" id="2.60.15.10">
    <property type="entry name" value="F0F1 ATP synthase delta/epsilon subunit, N-terminal"/>
    <property type="match status" value="1"/>
</dbReference>
<dbReference type="HAMAP" id="MF_00530">
    <property type="entry name" value="ATP_synth_epsil_bac"/>
    <property type="match status" value="1"/>
</dbReference>
<dbReference type="InterPro" id="IPR001469">
    <property type="entry name" value="ATP_synth_F1_dsu/esu"/>
</dbReference>
<dbReference type="InterPro" id="IPR020546">
    <property type="entry name" value="ATP_synth_F1_dsu/esu_N"/>
</dbReference>
<dbReference type="InterPro" id="IPR020547">
    <property type="entry name" value="ATP_synth_F1_esu_C"/>
</dbReference>
<dbReference type="InterPro" id="IPR036771">
    <property type="entry name" value="ATPsynth_dsu/esu_N"/>
</dbReference>
<dbReference type="NCBIfam" id="TIGR01216">
    <property type="entry name" value="ATP_synt_epsi"/>
    <property type="match status" value="1"/>
</dbReference>
<dbReference type="PANTHER" id="PTHR13822">
    <property type="entry name" value="ATP SYNTHASE DELTA/EPSILON CHAIN"/>
    <property type="match status" value="1"/>
</dbReference>
<dbReference type="PANTHER" id="PTHR13822:SF10">
    <property type="entry name" value="ATP SYNTHASE EPSILON CHAIN, CHLOROPLASTIC"/>
    <property type="match status" value="1"/>
</dbReference>
<dbReference type="Pfam" id="PF00401">
    <property type="entry name" value="ATP-synt_DE"/>
    <property type="match status" value="1"/>
</dbReference>
<dbReference type="Pfam" id="PF02823">
    <property type="entry name" value="ATP-synt_DE_N"/>
    <property type="match status" value="1"/>
</dbReference>
<dbReference type="SUPFAM" id="SSF51344">
    <property type="entry name" value="Epsilon subunit of F1F0-ATP synthase N-terminal domain"/>
    <property type="match status" value="1"/>
</dbReference>
<proteinExistence type="inferred from homology"/>
<protein>
    <recommendedName>
        <fullName evidence="1">ATP synthase epsilon chain, chloroplastic</fullName>
    </recommendedName>
    <alternativeName>
        <fullName evidence="1">ATP synthase F1 sector epsilon subunit</fullName>
    </alternativeName>
    <alternativeName>
        <fullName evidence="1">F-ATPase epsilon subunit</fullName>
    </alternativeName>
</protein>
<evidence type="ECO:0000255" key="1">
    <source>
        <dbReference type="HAMAP-Rule" id="MF_00530"/>
    </source>
</evidence>
<keyword id="KW-0066">ATP synthesis</keyword>
<keyword id="KW-0139">CF(1)</keyword>
<keyword id="KW-0150">Chloroplast</keyword>
<keyword id="KW-0375">Hydrogen ion transport</keyword>
<keyword id="KW-0406">Ion transport</keyword>
<keyword id="KW-0472">Membrane</keyword>
<keyword id="KW-0934">Plastid</keyword>
<keyword id="KW-0793">Thylakoid</keyword>
<keyword id="KW-0813">Transport</keyword>